<sequence length="329" mass="36380">MSMVEENRPFAQQLSNVYFTILSLFCFKLFVKISLAILSHFYIVKGNRKEAARIAAEFYGVTQGRGSWADRSPLHEAASQGRLLALRTLLSQGYNVNAVTIDHVTPLHEACLGDHVACARTLLQAGANVNAITIDGVTPLFNACSQGSTSCTELLLEYGAKPQLESCLPSPTHEAASKGHHECLEILISWGVDVDQDIPHLGTPLYVACMSQQFHCVRKLLYAGADVQKGKYWDTPLHAAAQQSCTEIVNLLLEFGADINAKNTDLLRPVDVATSNSLVERLLLQHEATPSSLCQLCRLCIRNYIGRPRLHLIPQLQLPTLLQNFLQYR</sequence>
<proteinExistence type="evidence at transcript level"/>
<name>ASB5_BOVIN</name>
<keyword id="KW-0040">ANK repeat</keyword>
<keyword id="KW-1185">Reference proteome</keyword>
<keyword id="KW-0677">Repeat</keyword>
<keyword id="KW-0833">Ubl conjugation pathway</keyword>
<organism>
    <name type="scientific">Bos taurus</name>
    <name type="common">Bovine</name>
    <dbReference type="NCBI Taxonomy" id="9913"/>
    <lineage>
        <taxon>Eukaryota</taxon>
        <taxon>Metazoa</taxon>
        <taxon>Chordata</taxon>
        <taxon>Craniata</taxon>
        <taxon>Vertebrata</taxon>
        <taxon>Euteleostomi</taxon>
        <taxon>Mammalia</taxon>
        <taxon>Eutheria</taxon>
        <taxon>Laurasiatheria</taxon>
        <taxon>Artiodactyla</taxon>
        <taxon>Ruminantia</taxon>
        <taxon>Pecora</taxon>
        <taxon>Bovidae</taxon>
        <taxon>Bovinae</taxon>
        <taxon>Bos</taxon>
    </lineage>
</organism>
<reference key="1">
    <citation type="submission" date="2006-06" db="EMBL/GenBank/DDBJ databases">
        <authorList>
            <consortium name="NIH - Mammalian Gene Collection (MGC) project"/>
        </authorList>
    </citation>
    <scope>NUCLEOTIDE SEQUENCE [LARGE SCALE MRNA]</scope>
    <source>
        <strain>Hereford</strain>
        <tissue>Thalamus</tissue>
    </source>
</reference>
<comment type="function">
    <text evidence="1">May be a substrate-recognition component of a SCF-like ECS (Elongin-Cullin-SOCS-box protein) E3 ubiquitin-protein ligase complex which mediates the ubiquitination and subsequent proteasomal degradation of target proteins. May play a role in the initiation of arteriogenesis (By similarity).</text>
</comment>
<comment type="pathway">
    <text>Protein modification; protein ubiquitination.</text>
</comment>
<comment type="domain">
    <text evidence="1">The SOCS box domain mediates the interaction with the Elongin BC complex, an adapter module in different E3 ubiquitin-protein ligase complexes.</text>
</comment>
<comment type="similarity">
    <text evidence="3">Belongs to the ankyrin SOCS box (ASB) family.</text>
</comment>
<dbReference type="EMBL" id="BC118205">
    <property type="protein sequence ID" value="AAI18206.1"/>
    <property type="molecule type" value="mRNA"/>
</dbReference>
<dbReference type="RefSeq" id="NP_001069212.1">
    <property type="nucleotide sequence ID" value="NM_001075744.1"/>
</dbReference>
<dbReference type="SMR" id="Q17QS6"/>
<dbReference type="FunCoup" id="Q17QS6">
    <property type="interactions" value="32"/>
</dbReference>
<dbReference type="STRING" id="9913.ENSBTAP00000064668"/>
<dbReference type="PaxDb" id="9913-ENSBTAP00000018799"/>
<dbReference type="Ensembl" id="ENSBTAT00000018799.4">
    <property type="protein sequence ID" value="ENSBTAP00000018799.3"/>
    <property type="gene ID" value="ENSBTAG00000014143.5"/>
</dbReference>
<dbReference type="GeneID" id="516722"/>
<dbReference type="KEGG" id="bta:516722"/>
<dbReference type="CTD" id="140458"/>
<dbReference type="VEuPathDB" id="HostDB:ENSBTAG00000014143"/>
<dbReference type="VGNC" id="VGNC:26198">
    <property type="gene designation" value="ASB5"/>
</dbReference>
<dbReference type="eggNOG" id="KOG0504">
    <property type="taxonomic scope" value="Eukaryota"/>
</dbReference>
<dbReference type="GeneTree" id="ENSGT00940000159851"/>
<dbReference type="HOGENOM" id="CLU_000134_4_1_1"/>
<dbReference type="InParanoid" id="Q17QS6"/>
<dbReference type="OrthoDB" id="3246549at2759"/>
<dbReference type="TreeFam" id="TF331945"/>
<dbReference type="Reactome" id="R-BTA-8951664">
    <property type="pathway name" value="Neddylation"/>
</dbReference>
<dbReference type="Reactome" id="R-BTA-983168">
    <property type="pathway name" value="Antigen processing: Ubiquitination &amp; Proteasome degradation"/>
</dbReference>
<dbReference type="UniPathway" id="UPA00143"/>
<dbReference type="Proteomes" id="UP000009136">
    <property type="component" value="Chromosome 27"/>
</dbReference>
<dbReference type="Bgee" id="ENSBTAG00000014143">
    <property type="expression patterns" value="Expressed in gluteus medius and 85 other cell types or tissues"/>
</dbReference>
<dbReference type="GO" id="GO:0035556">
    <property type="term" value="P:intracellular signal transduction"/>
    <property type="evidence" value="ECO:0007669"/>
    <property type="project" value="InterPro"/>
</dbReference>
<dbReference type="GO" id="GO:0045732">
    <property type="term" value="P:positive regulation of protein catabolic process"/>
    <property type="evidence" value="ECO:0000318"/>
    <property type="project" value="GO_Central"/>
</dbReference>
<dbReference type="GO" id="GO:0016567">
    <property type="term" value="P:protein ubiquitination"/>
    <property type="evidence" value="ECO:0000318"/>
    <property type="project" value="GO_Central"/>
</dbReference>
<dbReference type="CDD" id="cd03724">
    <property type="entry name" value="SOCS_ASB5"/>
    <property type="match status" value="1"/>
</dbReference>
<dbReference type="FunFam" id="1.10.750.20:FF:000001">
    <property type="entry name" value="Ankyrin repeat and SOCS box containing 1"/>
    <property type="match status" value="1"/>
</dbReference>
<dbReference type="FunFam" id="1.25.40.20:FF:000016">
    <property type="entry name" value="Ankyrin repeat and SOCS box containing 5"/>
    <property type="match status" value="1"/>
</dbReference>
<dbReference type="Gene3D" id="1.25.40.20">
    <property type="entry name" value="Ankyrin repeat-containing domain"/>
    <property type="match status" value="1"/>
</dbReference>
<dbReference type="Gene3D" id="1.10.750.20">
    <property type="entry name" value="SOCS box"/>
    <property type="match status" value="1"/>
</dbReference>
<dbReference type="InterPro" id="IPR051573">
    <property type="entry name" value="Ankyrin-SOCS_box_domain"/>
</dbReference>
<dbReference type="InterPro" id="IPR002110">
    <property type="entry name" value="Ankyrin_rpt"/>
</dbReference>
<dbReference type="InterPro" id="IPR036770">
    <property type="entry name" value="Ankyrin_rpt-contain_sf"/>
</dbReference>
<dbReference type="InterPro" id="IPR037328">
    <property type="entry name" value="ASB5_SOCS"/>
</dbReference>
<dbReference type="InterPro" id="IPR001496">
    <property type="entry name" value="SOCS_box"/>
</dbReference>
<dbReference type="InterPro" id="IPR036036">
    <property type="entry name" value="SOCS_box-like_dom_sf"/>
</dbReference>
<dbReference type="PANTHER" id="PTHR24136:SF18">
    <property type="entry name" value="ANKYRIN REPEAT AND SOCS BOX PROTEIN 5"/>
    <property type="match status" value="1"/>
</dbReference>
<dbReference type="PANTHER" id="PTHR24136">
    <property type="entry name" value="SOWAH (DROSOPHILA) HOMOLOG"/>
    <property type="match status" value="1"/>
</dbReference>
<dbReference type="Pfam" id="PF12796">
    <property type="entry name" value="Ank_2"/>
    <property type="match status" value="2"/>
</dbReference>
<dbReference type="Pfam" id="PF07525">
    <property type="entry name" value="SOCS_box"/>
    <property type="match status" value="1"/>
</dbReference>
<dbReference type="PRINTS" id="PR01415">
    <property type="entry name" value="ANKYRIN"/>
</dbReference>
<dbReference type="SMART" id="SM00248">
    <property type="entry name" value="ANK"/>
    <property type="match status" value="6"/>
</dbReference>
<dbReference type="SMART" id="SM00969">
    <property type="entry name" value="SOCS_box"/>
    <property type="match status" value="1"/>
</dbReference>
<dbReference type="SUPFAM" id="SSF48403">
    <property type="entry name" value="Ankyrin repeat"/>
    <property type="match status" value="1"/>
</dbReference>
<dbReference type="SUPFAM" id="SSF158235">
    <property type="entry name" value="SOCS box-like"/>
    <property type="match status" value="1"/>
</dbReference>
<dbReference type="PROSITE" id="PS50297">
    <property type="entry name" value="ANK_REP_REGION"/>
    <property type="match status" value="1"/>
</dbReference>
<dbReference type="PROSITE" id="PS50088">
    <property type="entry name" value="ANK_REPEAT"/>
    <property type="match status" value="4"/>
</dbReference>
<dbReference type="PROSITE" id="PS50225">
    <property type="entry name" value="SOCS"/>
    <property type="match status" value="1"/>
</dbReference>
<gene>
    <name type="primary">ASB5</name>
</gene>
<protein>
    <recommendedName>
        <fullName>Ankyrin repeat and SOCS box protein 5</fullName>
        <shortName>ASB-5</shortName>
    </recommendedName>
</protein>
<feature type="chain" id="PRO_0000283055" description="Ankyrin repeat and SOCS box protein 5">
    <location>
        <begin position="1"/>
        <end position="329"/>
    </location>
</feature>
<feature type="repeat" description="ANK 1">
    <location>
        <begin position="69"/>
        <end position="98"/>
    </location>
</feature>
<feature type="repeat" description="ANK 2">
    <location>
        <begin position="102"/>
        <end position="131"/>
    </location>
</feature>
<feature type="repeat" description="ANK 3">
    <location>
        <begin position="135"/>
        <end position="164"/>
    </location>
</feature>
<feature type="repeat" description="ANK 4">
    <location>
        <begin position="167"/>
        <end position="196"/>
    </location>
</feature>
<feature type="repeat" description="ANK 5">
    <location>
        <begin position="200"/>
        <end position="229"/>
    </location>
</feature>
<feature type="repeat" description="ANK 6">
    <location>
        <begin position="232"/>
        <end position="261"/>
    </location>
</feature>
<feature type="domain" description="SOCS box" evidence="2">
    <location>
        <begin position="278"/>
        <end position="329"/>
    </location>
</feature>
<accession>Q17QS6</accession>
<evidence type="ECO:0000250" key="1"/>
<evidence type="ECO:0000255" key="2">
    <source>
        <dbReference type="PROSITE-ProRule" id="PRU00194"/>
    </source>
</evidence>
<evidence type="ECO:0000305" key="3"/>